<reference key="1">
    <citation type="journal article" date="2007" name="Nat. Biotechnol.">
        <title>Complete genome sequence of the erythromycin-producing bacterium Saccharopolyspora erythraea NRRL23338.</title>
        <authorList>
            <person name="Oliynyk M."/>
            <person name="Samborskyy M."/>
            <person name="Lester J.B."/>
            <person name="Mironenko T."/>
            <person name="Scott N."/>
            <person name="Dickens S."/>
            <person name="Haydock S.F."/>
            <person name="Leadlay P.F."/>
        </authorList>
    </citation>
    <scope>NUCLEOTIDE SEQUENCE [LARGE SCALE GENOMIC DNA]</scope>
    <source>
        <strain>ATCC 11635 / DSM 40517 / JCM 4748 / NBRC 13426 / NCIMB 8594 / NRRL 2338</strain>
    </source>
</reference>
<feature type="chain" id="PRO_1000006171" description="Elongation factor Ts">
    <location>
        <begin position="1"/>
        <end position="271"/>
    </location>
</feature>
<feature type="region of interest" description="Involved in Mg(2+) ion dislocation from EF-Tu" evidence="1">
    <location>
        <begin position="76"/>
        <end position="79"/>
    </location>
</feature>
<comment type="function">
    <text evidence="1">Associates with the EF-Tu.GDP complex and induces the exchange of GDP to GTP. It remains bound to the aminoacyl-tRNA.EF-Tu.GTP complex up to the GTP hydrolysis stage on the ribosome.</text>
</comment>
<comment type="subcellular location">
    <subcellularLocation>
        <location evidence="1">Cytoplasm</location>
    </subcellularLocation>
</comment>
<comment type="similarity">
    <text evidence="1">Belongs to the EF-Ts family.</text>
</comment>
<organism>
    <name type="scientific">Saccharopolyspora erythraea (strain ATCC 11635 / DSM 40517 / JCM 4748 / NBRC 13426 / NCIMB 8594 / NRRL 2338)</name>
    <dbReference type="NCBI Taxonomy" id="405948"/>
    <lineage>
        <taxon>Bacteria</taxon>
        <taxon>Bacillati</taxon>
        <taxon>Actinomycetota</taxon>
        <taxon>Actinomycetes</taxon>
        <taxon>Pseudonocardiales</taxon>
        <taxon>Pseudonocardiaceae</taxon>
        <taxon>Saccharopolyspora</taxon>
    </lineage>
</organism>
<keyword id="KW-0963">Cytoplasm</keyword>
<keyword id="KW-0251">Elongation factor</keyword>
<keyword id="KW-0648">Protein biosynthesis</keyword>
<keyword id="KW-1185">Reference proteome</keyword>
<name>EFTS_SACEN</name>
<protein>
    <recommendedName>
        <fullName evidence="1">Elongation factor Ts</fullName>
        <shortName evidence="1">EF-Ts</shortName>
    </recommendedName>
</protein>
<evidence type="ECO:0000255" key="1">
    <source>
        <dbReference type="HAMAP-Rule" id="MF_00050"/>
    </source>
</evidence>
<dbReference type="EMBL" id="AM420293">
    <property type="protein sequence ID" value="CAM05211.1"/>
    <property type="molecule type" value="Genomic_DNA"/>
</dbReference>
<dbReference type="RefSeq" id="WP_009943634.1">
    <property type="nucleotide sequence ID" value="NC_009142.1"/>
</dbReference>
<dbReference type="SMR" id="A4FMD6"/>
<dbReference type="STRING" id="405948.SACE_6037"/>
<dbReference type="KEGG" id="sen:SACE_6037"/>
<dbReference type="eggNOG" id="COG0264">
    <property type="taxonomic scope" value="Bacteria"/>
</dbReference>
<dbReference type="HOGENOM" id="CLU_047155_0_0_11"/>
<dbReference type="OrthoDB" id="9808348at2"/>
<dbReference type="Proteomes" id="UP000006728">
    <property type="component" value="Chromosome"/>
</dbReference>
<dbReference type="GO" id="GO:0005737">
    <property type="term" value="C:cytoplasm"/>
    <property type="evidence" value="ECO:0007669"/>
    <property type="project" value="UniProtKB-SubCell"/>
</dbReference>
<dbReference type="GO" id="GO:0003746">
    <property type="term" value="F:translation elongation factor activity"/>
    <property type="evidence" value="ECO:0007669"/>
    <property type="project" value="UniProtKB-UniRule"/>
</dbReference>
<dbReference type="CDD" id="cd14275">
    <property type="entry name" value="UBA_EF-Ts"/>
    <property type="match status" value="1"/>
</dbReference>
<dbReference type="FunFam" id="1.10.286.20:FF:000001">
    <property type="entry name" value="Elongation factor Ts"/>
    <property type="match status" value="1"/>
</dbReference>
<dbReference type="FunFam" id="1.10.8.10:FF:000001">
    <property type="entry name" value="Elongation factor Ts"/>
    <property type="match status" value="1"/>
</dbReference>
<dbReference type="Gene3D" id="1.10.286.20">
    <property type="match status" value="1"/>
</dbReference>
<dbReference type="Gene3D" id="1.10.8.10">
    <property type="entry name" value="DNA helicase RuvA subunit, C-terminal domain"/>
    <property type="match status" value="1"/>
</dbReference>
<dbReference type="Gene3D" id="3.30.479.20">
    <property type="entry name" value="Elongation factor Ts, dimerisation domain"/>
    <property type="match status" value="2"/>
</dbReference>
<dbReference type="HAMAP" id="MF_00050">
    <property type="entry name" value="EF_Ts"/>
    <property type="match status" value="1"/>
</dbReference>
<dbReference type="InterPro" id="IPR036402">
    <property type="entry name" value="EF-Ts_dimer_sf"/>
</dbReference>
<dbReference type="InterPro" id="IPR001816">
    <property type="entry name" value="Transl_elong_EFTs/EF1B"/>
</dbReference>
<dbReference type="InterPro" id="IPR014039">
    <property type="entry name" value="Transl_elong_EFTs/EF1B_dimer"/>
</dbReference>
<dbReference type="InterPro" id="IPR018101">
    <property type="entry name" value="Transl_elong_Ts_CS"/>
</dbReference>
<dbReference type="InterPro" id="IPR009060">
    <property type="entry name" value="UBA-like_sf"/>
</dbReference>
<dbReference type="NCBIfam" id="TIGR00116">
    <property type="entry name" value="tsf"/>
    <property type="match status" value="1"/>
</dbReference>
<dbReference type="PANTHER" id="PTHR11741">
    <property type="entry name" value="ELONGATION FACTOR TS"/>
    <property type="match status" value="1"/>
</dbReference>
<dbReference type="PANTHER" id="PTHR11741:SF0">
    <property type="entry name" value="ELONGATION FACTOR TS, MITOCHONDRIAL"/>
    <property type="match status" value="1"/>
</dbReference>
<dbReference type="Pfam" id="PF00889">
    <property type="entry name" value="EF_TS"/>
    <property type="match status" value="1"/>
</dbReference>
<dbReference type="SUPFAM" id="SSF54713">
    <property type="entry name" value="Elongation factor Ts (EF-Ts), dimerisation domain"/>
    <property type="match status" value="1"/>
</dbReference>
<dbReference type="SUPFAM" id="SSF46934">
    <property type="entry name" value="UBA-like"/>
    <property type="match status" value="1"/>
</dbReference>
<dbReference type="PROSITE" id="PS01126">
    <property type="entry name" value="EF_TS_1"/>
    <property type="match status" value="1"/>
</dbReference>
<dbReference type="PROSITE" id="PS01127">
    <property type="entry name" value="EF_TS_2"/>
    <property type="match status" value="1"/>
</dbReference>
<proteinExistence type="inferred from homology"/>
<gene>
    <name evidence="1" type="primary">tsf</name>
    <name type="ordered locus">SACE_6037</name>
</gene>
<accession>A4FMD6</accession>
<sequence>MANYSAADVKRLRELTGAGMMDCKKALEATEGDFDKAVENLRIKGAKDVGKRAERATAEGLVAADNGVLVELNSETDFVAKNDEFIELANKVVAAVKAAGARDLEGALAASLDGKTVGEVVQELSAKIGEKLELRRVATFDGKVATYLHRRSADLPPAVGVLVEYTGDSEEAARGAAMQVAALKPKYLNRDEVPADIVADERRIAEETARAEGKPEKALEKIVEGRLNGFYKDNVLLDQPSVQDSKKTVKALLDEAGVTVTGFARFEVGQA</sequence>